<gene>
    <name evidence="1" type="primary">hprK</name>
    <name type="ordered locus">LSEI_0945</name>
</gene>
<evidence type="ECO:0000255" key="1">
    <source>
        <dbReference type="HAMAP-Rule" id="MF_01249"/>
    </source>
</evidence>
<protein>
    <recommendedName>
        <fullName evidence="1">HPr kinase/phosphorylase</fullName>
        <shortName evidence="1">HPrK/P</shortName>
        <ecNumber evidence="1">2.7.11.-</ecNumber>
        <ecNumber evidence="1">2.7.4.-</ecNumber>
    </recommendedName>
    <alternativeName>
        <fullName evidence="1">HPr(Ser) kinase/phosphorylase</fullName>
    </alternativeName>
</protein>
<reference key="1">
    <citation type="journal article" date="2006" name="Proc. Natl. Acad. Sci. U.S.A.">
        <title>Comparative genomics of the lactic acid bacteria.</title>
        <authorList>
            <person name="Makarova K.S."/>
            <person name="Slesarev A."/>
            <person name="Wolf Y.I."/>
            <person name="Sorokin A."/>
            <person name="Mirkin B."/>
            <person name="Koonin E.V."/>
            <person name="Pavlov A."/>
            <person name="Pavlova N."/>
            <person name="Karamychev V."/>
            <person name="Polouchine N."/>
            <person name="Shakhova V."/>
            <person name="Grigoriev I."/>
            <person name="Lou Y."/>
            <person name="Rohksar D."/>
            <person name="Lucas S."/>
            <person name="Huang K."/>
            <person name="Goodstein D.M."/>
            <person name="Hawkins T."/>
            <person name="Plengvidhya V."/>
            <person name="Welker D."/>
            <person name="Hughes J."/>
            <person name="Goh Y."/>
            <person name="Benson A."/>
            <person name="Baldwin K."/>
            <person name="Lee J.-H."/>
            <person name="Diaz-Muniz I."/>
            <person name="Dosti B."/>
            <person name="Smeianov V."/>
            <person name="Wechter W."/>
            <person name="Barabote R."/>
            <person name="Lorca G."/>
            <person name="Altermann E."/>
            <person name="Barrangou R."/>
            <person name="Ganesan B."/>
            <person name="Xie Y."/>
            <person name="Rawsthorne H."/>
            <person name="Tamir D."/>
            <person name="Parker C."/>
            <person name="Breidt F."/>
            <person name="Broadbent J.R."/>
            <person name="Hutkins R."/>
            <person name="O'Sullivan D."/>
            <person name="Steele J."/>
            <person name="Unlu G."/>
            <person name="Saier M.H. Jr."/>
            <person name="Klaenhammer T."/>
            <person name="Richardson P."/>
            <person name="Kozyavkin S."/>
            <person name="Weimer B.C."/>
            <person name="Mills D.A."/>
        </authorList>
    </citation>
    <scope>NUCLEOTIDE SEQUENCE [LARGE SCALE GENOMIC DNA]</scope>
    <source>
        <strain>ATCC 334 / BCRC 17002 / CCUG 31169 / CIP 107868 / KCTC 3260 / NRRL B-441</strain>
    </source>
</reference>
<sequence length="319" mass="35348">MADSVTVRQLVKATKLEVYSGEEYLDQRQVVLSDISRPGLELTGYFNYYPHERIQLFGRTEISFARNMSSEERLLILKRMATEDTPAFLVSRGLEAPAEMITAATAAHIPVLGSRLPTTRLSSLITEYLDSQLAERRSMHGVLVDIYGLGVLITGDSGVGKSETALELVQRGHRLIADDRVDVYQQDEQTIVGAAPPILSHLLEIRGLGIIDVMNLFGAGAVREDTTISLIVHLENWTPDKTFDRLGSGEQTQLIFDVPVPKITVPVKVGRNLAIIIEVAAMNFRAKSMGYDATKTFEKNLNHLIEHNEETDQNSSGDK</sequence>
<feature type="chain" id="PRO_1000067151" description="HPr kinase/phosphorylase">
    <location>
        <begin position="1"/>
        <end position="319"/>
    </location>
</feature>
<feature type="region of interest" description="Important for the catalytic mechanism of both phosphorylation and dephosphorylation" evidence="1">
    <location>
        <begin position="203"/>
        <end position="212"/>
    </location>
</feature>
<feature type="region of interest" description="Important for the catalytic mechanism of dephosphorylation" evidence="1">
    <location>
        <begin position="266"/>
        <end position="271"/>
    </location>
</feature>
<feature type="active site" evidence="1">
    <location>
        <position position="140"/>
    </location>
</feature>
<feature type="active site" evidence="1">
    <location>
        <position position="161"/>
    </location>
</feature>
<feature type="active site" description="Proton acceptor; for phosphorylation activity. Proton donor; for dephosphorylation activity" evidence="1">
    <location>
        <position position="179"/>
    </location>
</feature>
<feature type="active site" evidence="1">
    <location>
        <position position="245"/>
    </location>
</feature>
<feature type="binding site" evidence="1">
    <location>
        <begin position="155"/>
        <end position="162"/>
    </location>
    <ligand>
        <name>ATP</name>
        <dbReference type="ChEBI" id="CHEBI:30616"/>
    </ligand>
</feature>
<feature type="binding site" evidence="1">
    <location>
        <position position="162"/>
    </location>
    <ligand>
        <name>Mg(2+)</name>
        <dbReference type="ChEBI" id="CHEBI:18420"/>
    </ligand>
</feature>
<feature type="binding site" evidence="1">
    <location>
        <position position="204"/>
    </location>
    <ligand>
        <name>Mg(2+)</name>
        <dbReference type="ChEBI" id="CHEBI:18420"/>
    </ligand>
</feature>
<accession>Q03AM8</accession>
<dbReference type="EC" id="2.7.11.-" evidence="1"/>
<dbReference type="EC" id="2.7.4.-" evidence="1"/>
<dbReference type="EMBL" id="CP000423">
    <property type="protein sequence ID" value="ABJ69744.1"/>
    <property type="molecule type" value="Genomic_DNA"/>
</dbReference>
<dbReference type="RefSeq" id="WP_003564222.1">
    <property type="nucleotide sequence ID" value="NC_008526.1"/>
</dbReference>
<dbReference type="RefSeq" id="YP_806186.1">
    <property type="nucleotide sequence ID" value="NC_008526.1"/>
</dbReference>
<dbReference type="SMR" id="Q03AM8"/>
<dbReference type="STRING" id="321967.LSEI_0945"/>
<dbReference type="PaxDb" id="321967-LSEI_0945"/>
<dbReference type="GeneID" id="57089593"/>
<dbReference type="KEGG" id="lca:LSEI_0945"/>
<dbReference type="PATRIC" id="fig|321967.11.peg.916"/>
<dbReference type="HOGENOM" id="CLU_052030_0_1_9"/>
<dbReference type="Proteomes" id="UP000001651">
    <property type="component" value="Chromosome"/>
</dbReference>
<dbReference type="GO" id="GO:0005524">
    <property type="term" value="F:ATP binding"/>
    <property type="evidence" value="ECO:0007669"/>
    <property type="project" value="UniProtKB-UniRule"/>
</dbReference>
<dbReference type="GO" id="GO:0000287">
    <property type="term" value="F:magnesium ion binding"/>
    <property type="evidence" value="ECO:0007669"/>
    <property type="project" value="UniProtKB-UniRule"/>
</dbReference>
<dbReference type="GO" id="GO:0000155">
    <property type="term" value="F:phosphorelay sensor kinase activity"/>
    <property type="evidence" value="ECO:0007669"/>
    <property type="project" value="InterPro"/>
</dbReference>
<dbReference type="GO" id="GO:0004674">
    <property type="term" value="F:protein serine/threonine kinase activity"/>
    <property type="evidence" value="ECO:0007669"/>
    <property type="project" value="UniProtKB-KW"/>
</dbReference>
<dbReference type="GO" id="GO:0004712">
    <property type="term" value="F:protein serine/threonine/tyrosine kinase activity"/>
    <property type="evidence" value="ECO:0007669"/>
    <property type="project" value="UniProtKB-UniRule"/>
</dbReference>
<dbReference type="GO" id="GO:0006109">
    <property type="term" value="P:regulation of carbohydrate metabolic process"/>
    <property type="evidence" value="ECO:0007669"/>
    <property type="project" value="UniProtKB-UniRule"/>
</dbReference>
<dbReference type="CDD" id="cd01918">
    <property type="entry name" value="HprK_C"/>
    <property type="match status" value="1"/>
</dbReference>
<dbReference type="FunFam" id="3.40.50.300:FF:000174">
    <property type="entry name" value="HPr kinase/phosphorylase"/>
    <property type="match status" value="1"/>
</dbReference>
<dbReference type="Gene3D" id="3.40.1390.20">
    <property type="entry name" value="HprK N-terminal domain-like"/>
    <property type="match status" value="1"/>
</dbReference>
<dbReference type="Gene3D" id="3.40.50.300">
    <property type="entry name" value="P-loop containing nucleotide triphosphate hydrolases"/>
    <property type="match status" value="1"/>
</dbReference>
<dbReference type="HAMAP" id="MF_01249">
    <property type="entry name" value="HPr_kinase"/>
    <property type="match status" value="1"/>
</dbReference>
<dbReference type="InterPro" id="IPR003755">
    <property type="entry name" value="HPr(Ser)_kin/Pase"/>
</dbReference>
<dbReference type="InterPro" id="IPR011104">
    <property type="entry name" value="Hpr_kin/Pase_C"/>
</dbReference>
<dbReference type="InterPro" id="IPR011126">
    <property type="entry name" value="Hpr_kin/Pase_Hpr_N"/>
</dbReference>
<dbReference type="InterPro" id="IPR027417">
    <property type="entry name" value="P-loop_NTPase"/>
</dbReference>
<dbReference type="InterPro" id="IPR028979">
    <property type="entry name" value="Ser_kin/Pase_Hpr-like_N_sf"/>
</dbReference>
<dbReference type="NCBIfam" id="TIGR00679">
    <property type="entry name" value="hpr-ser"/>
    <property type="match status" value="1"/>
</dbReference>
<dbReference type="PANTHER" id="PTHR30305:SF1">
    <property type="entry name" value="HPR KINASE_PHOSPHORYLASE"/>
    <property type="match status" value="1"/>
</dbReference>
<dbReference type="PANTHER" id="PTHR30305">
    <property type="entry name" value="PROTEIN YJDM-RELATED"/>
    <property type="match status" value="1"/>
</dbReference>
<dbReference type="Pfam" id="PF07475">
    <property type="entry name" value="Hpr_kinase_C"/>
    <property type="match status" value="1"/>
</dbReference>
<dbReference type="Pfam" id="PF02603">
    <property type="entry name" value="Hpr_kinase_N"/>
    <property type="match status" value="1"/>
</dbReference>
<dbReference type="SUPFAM" id="SSF75138">
    <property type="entry name" value="HprK N-terminal domain-like"/>
    <property type="match status" value="1"/>
</dbReference>
<dbReference type="SUPFAM" id="SSF53795">
    <property type="entry name" value="PEP carboxykinase-like"/>
    <property type="match status" value="1"/>
</dbReference>
<keyword id="KW-0067">ATP-binding</keyword>
<keyword id="KW-0119">Carbohydrate metabolism</keyword>
<keyword id="KW-0418">Kinase</keyword>
<keyword id="KW-0460">Magnesium</keyword>
<keyword id="KW-0479">Metal-binding</keyword>
<keyword id="KW-0511">Multifunctional enzyme</keyword>
<keyword id="KW-0547">Nucleotide-binding</keyword>
<keyword id="KW-1185">Reference proteome</keyword>
<keyword id="KW-0723">Serine/threonine-protein kinase</keyword>
<keyword id="KW-0808">Transferase</keyword>
<organism>
    <name type="scientific">Lacticaseibacillus paracasei (strain ATCC 334 / BCRC 17002 / CCUG 31169 / CIP 107868 / KCTC 3260 / NRRL B-441)</name>
    <name type="common">Lactobacillus paracasei</name>
    <dbReference type="NCBI Taxonomy" id="321967"/>
    <lineage>
        <taxon>Bacteria</taxon>
        <taxon>Bacillati</taxon>
        <taxon>Bacillota</taxon>
        <taxon>Bacilli</taxon>
        <taxon>Lactobacillales</taxon>
        <taxon>Lactobacillaceae</taxon>
        <taxon>Lacticaseibacillus</taxon>
    </lineage>
</organism>
<comment type="function">
    <text evidence="1">Catalyzes the ATP- as well as the pyrophosphate-dependent phosphorylation of a specific serine residue in HPr, a phosphocarrier protein of the phosphoenolpyruvate-dependent sugar phosphotransferase system (PTS). HprK/P also catalyzes the pyrophosphate-producing, inorganic phosphate-dependent dephosphorylation (phosphorolysis) of seryl-phosphorylated HPr (P-Ser-HPr). The two antagonistic activities of HprK/P are regulated by several intracellular metabolites, which change their concentration in response to the absence or presence of rapidly metabolisable carbon sources (glucose, fructose, etc.) in the growth medium. Therefore, by controlling the phosphorylation state of HPr, HPrK/P is a sensor enzyme that plays a major role in the regulation of carbon metabolism and sugar transport: it mediates carbon catabolite repression (CCR), and regulates PTS-catalyzed carbohydrate uptake and inducer exclusion.</text>
</comment>
<comment type="catalytic activity">
    <reaction evidence="1">
        <text>[HPr protein]-L-serine + ATP = [HPr protein]-O-phospho-L-serine + ADP + H(+)</text>
        <dbReference type="Rhea" id="RHEA:46600"/>
        <dbReference type="Rhea" id="RHEA-COMP:11602"/>
        <dbReference type="Rhea" id="RHEA-COMP:11603"/>
        <dbReference type="ChEBI" id="CHEBI:15378"/>
        <dbReference type="ChEBI" id="CHEBI:29999"/>
        <dbReference type="ChEBI" id="CHEBI:30616"/>
        <dbReference type="ChEBI" id="CHEBI:83421"/>
        <dbReference type="ChEBI" id="CHEBI:456216"/>
    </reaction>
</comment>
<comment type="catalytic activity">
    <reaction evidence="1">
        <text>[HPr protein]-O-phospho-L-serine + phosphate + H(+) = [HPr protein]-L-serine + diphosphate</text>
        <dbReference type="Rhea" id="RHEA:46604"/>
        <dbReference type="Rhea" id="RHEA-COMP:11602"/>
        <dbReference type="Rhea" id="RHEA-COMP:11603"/>
        <dbReference type="ChEBI" id="CHEBI:15378"/>
        <dbReference type="ChEBI" id="CHEBI:29999"/>
        <dbReference type="ChEBI" id="CHEBI:33019"/>
        <dbReference type="ChEBI" id="CHEBI:43474"/>
        <dbReference type="ChEBI" id="CHEBI:83421"/>
    </reaction>
</comment>
<comment type="cofactor">
    <cofactor evidence="1">
        <name>Mg(2+)</name>
        <dbReference type="ChEBI" id="CHEBI:18420"/>
    </cofactor>
</comment>
<comment type="subunit">
    <text evidence="1">Homohexamer.</text>
</comment>
<comment type="domain">
    <text evidence="1">The Walker A ATP-binding motif also binds Pi and PPi.</text>
</comment>
<comment type="miscellaneous">
    <text evidence="1">Both phosphorylation and phosphorolysis are carried out by the same active site and suggest a common mechanism for both reactions.</text>
</comment>
<comment type="similarity">
    <text evidence="1">Belongs to the HPrK/P family.</text>
</comment>
<proteinExistence type="inferred from homology"/>
<name>HPRK_LACP3</name>